<evidence type="ECO:0000255" key="1">
    <source>
        <dbReference type="HAMAP-Rule" id="MF_01270"/>
    </source>
</evidence>
<protein>
    <recommendedName>
        <fullName evidence="1">Anhydro-N-acetylmuramic acid kinase</fullName>
        <ecNumber evidence="1">2.7.1.170</ecNumber>
    </recommendedName>
    <alternativeName>
        <fullName evidence="1">AnhMurNAc kinase</fullName>
    </alternativeName>
</protein>
<keyword id="KW-0067">ATP-binding</keyword>
<keyword id="KW-0119">Carbohydrate metabolism</keyword>
<keyword id="KW-0418">Kinase</keyword>
<keyword id="KW-0547">Nucleotide-binding</keyword>
<keyword id="KW-0808">Transferase</keyword>
<reference key="1">
    <citation type="submission" date="2008-10" db="EMBL/GenBank/DDBJ databases">
        <title>Genome sequence of Bacillus anthracis str. CDC 684.</title>
        <authorList>
            <person name="Dodson R.J."/>
            <person name="Munk A.C."/>
            <person name="Brettin T."/>
            <person name="Bruce D."/>
            <person name="Detter C."/>
            <person name="Tapia R."/>
            <person name="Han C."/>
            <person name="Sutton G."/>
            <person name="Sims D."/>
        </authorList>
    </citation>
    <scope>NUCLEOTIDE SEQUENCE [LARGE SCALE GENOMIC DNA]</scope>
    <source>
        <strain>CDC 684 / NRRL 3495</strain>
    </source>
</reference>
<name>ANMK_BACAC</name>
<dbReference type="EC" id="2.7.1.170" evidence="1"/>
<dbReference type="EMBL" id="CP001215">
    <property type="protein sequence ID" value="ACP14780.1"/>
    <property type="molecule type" value="Genomic_DNA"/>
</dbReference>
<dbReference type="RefSeq" id="WP_000274995.1">
    <property type="nucleotide sequence ID" value="NC_012581.1"/>
</dbReference>
<dbReference type="SMR" id="C3LIG8"/>
<dbReference type="GeneID" id="45022336"/>
<dbReference type="KEGG" id="bah:BAMEG_2136"/>
<dbReference type="HOGENOM" id="CLU_038782_1_0_9"/>
<dbReference type="UniPathway" id="UPA00343"/>
<dbReference type="UniPathway" id="UPA00544"/>
<dbReference type="GO" id="GO:0005524">
    <property type="term" value="F:ATP binding"/>
    <property type="evidence" value="ECO:0007669"/>
    <property type="project" value="UniProtKB-UniRule"/>
</dbReference>
<dbReference type="GO" id="GO:0016301">
    <property type="term" value="F:kinase activity"/>
    <property type="evidence" value="ECO:0007669"/>
    <property type="project" value="UniProtKB-KW"/>
</dbReference>
<dbReference type="GO" id="GO:0016773">
    <property type="term" value="F:phosphotransferase activity, alcohol group as acceptor"/>
    <property type="evidence" value="ECO:0007669"/>
    <property type="project" value="UniProtKB-UniRule"/>
</dbReference>
<dbReference type="GO" id="GO:0097175">
    <property type="term" value="P:1,6-anhydro-N-acetyl-beta-muramic acid catabolic process"/>
    <property type="evidence" value="ECO:0007669"/>
    <property type="project" value="UniProtKB-UniRule"/>
</dbReference>
<dbReference type="GO" id="GO:0006040">
    <property type="term" value="P:amino sugar metabolic process"/>
    <property type="evidence" value="ECO:0007669"/>
    <property type="project" value="InterPro"/>
</dbReference>
<dbReference type="GO" id="GO:0009254">
    <property type="term" value="P:peptidoglycan turnover"/>
    <property type="evidence" value="ECO:0007669"/>
    <property type="project" value="UniProtKB-UniRule"/>
</dbReference>
<dbReference type="CDD" id="cd24050">
    <property type="entry name" value="ASKHA_NBD_ANMK"/>
    <property type="match status" value="1"/>
</dbReference>
<dbReference type="Gene3D" id="3.30.420.40">
    <property type="match status" value="2"/>
</dbReference>
<dbReference type="HAMAP" id="MF_01270">
    <property type="entry name" value="AnhMurNAc_kinase"/>
    <property type="match status" value="1"/>
</dbReference>
<dbReference type="InterPro" id="IPR005338">
    <property type="entry name" value="Anhydro_N_Ac-Mur_kinase"/>
</dbReference>
<dbReference type="InterPro" id="IPR043129">
    <property type="entry name" value="ATPase_NBD"/>
</dbReference>
<dbReference type="NCBIfam" id="NF007142">
    <property type="entry name" value="PRK09585.2-1"/>
    <property type="match status" value="1"/>
</dbReference>
<dbReference type="NCBIfam" id="NF007148">
    <property type="entry name" value="PRK09585.3-2"/>
    <property type="match status" value="1"/>
</dbReference>
<dbReference type="PANTHER" id="PTHR30605">
    <property type="entry name" value="ANHYDRO-N-ACETYLMURAMIC ACID KINASE"/>
    <property type="match status" value="1"/>
</dbReference>
<dbReference type="PANTHER" id="PTHR30605:SF0">
    <property type="entry name" value="ANHYDRO-N-ACETYLMURAMIC ACID KINASE"/>
    <property type="match status" value="1"/>
</dbReference>
<dbReference type="Pfam" id="PF03702">
    <property type="entry name" value="AnmK"/>
    <property type="match status" value="1"/>
</dbReference>
<dbReference type="SUPFAM" id="SSF53067">
    <property type="entry name" value="Actin-like ATPase domain"/>
    <property type="match status" value="1"/>
</dbReference>
<accession>C3LIG8</accession>
<sequence>MYIAGVMSGTSLDGIDVALVRIEGSGVESKVELIHFTTVPFCNDIKSEIQQALSIENSNVQLICSLNFKLGLCFANAVKEVCKEANFSLEQLDLIGSHGQTIYHQPKQDGNRIPSTLQIGEPAVIAYETNTTVISNFRTMDMAAGGQGAPLVPYSEVILYRDPSKNRLLQNIGGISNVTVIPNQQSDQNVIAFDTGPGNMIIDEVCQRLFQLSYDQNGEIAKQGRVVDEILTYCMSHPFLKMNPPKSTGREQFGEKFASELLKRFEKHSKENILTTVTMFTANSIVHHYKKFILPYYEIDEVILGGGGSYNSTLVEMLRNGLKDENCAIFIQEDIGYSSEAKEAIAFAILANETHHCNPSNVPSATGAKQSVVFGNITFPPV</sequence>
<proteinExistence type="inferred from homology"/>
<organism>
    <name type="scientific">Bacillus anthracis (strain CDC 684 / NRRL 3495)</name>
    <dbReference type="NCBI Taxonomy" id="568206"/>
    <lineage>
        <taxon>Bacteria</taxon>
        <taxon>Bacillati</taxon>
        <taxon>Bacillota</taxon>
        <taxon>Bacilli</taxon>
        <taxon>Bacillales</taxon>
        <taxon>Bacillaceae</taxon>
        <taxon>Bacillus</taxon>
        <taxon>Bacillus cereus group</taxon>
    </lineage>
</organism>
<gene>
    <name evidence="1" type="primary">anmK</name>
    <name type="ordered locus">BAMEG_2136</name>
</gene>
<comment type="function">
    <text evidence="1">Catalyzes the specific phosphorylation of 1,6-anhydro-N-acetylmuramic acid (anhMurNAc) with the simultaneous cleavage of the 1,6-anhydro ring, generating MurNAc-6-P. Is required for the utilization of anhMurNAc either imported from the medium or derived from its own cell wall murein, and thus plays a role in cell wall recycling.</text>
</comment>
<comment type="catalytic activity">
    <reaction evidence="1">
        <text>1,6-anhydro-N-acetyl-beta-muramate + ATP + H2O = N-acetyl-D-muramate 6-phosphate + ADP + H(+)</text>
        <dbReference type="Rhea" id="RHEA:24952"/>
        <dbReference type="ChEBI" id="CHEBI:15377"/>
        <dbReference type="ChEBI" id="CHEBI:15378"/>
        <dbReference type="ChEBI" id="CHEBI:30616"/>
        <dbReference type="ChEBI" id="CHEBI:58690"/>
        <dbReference type="ChEBI" id="CHEBI:58722"/>
        <dbReference type="ChEBI" id="CHEBI:456216"/>
        <dbReference type="EC" id="2.7.1.170"/>
    </reaction>
</comment>
<comment type="pathway">
    <text evidence="1">Amino-sugar metabolism; 1,6-anhydro-N-acetylmuramate degradation.</text>
</comment>
<comment type="pathway">
    <text evidence="1">Cell wall biogenesis; peptidoglycan recycling.</text>
</comment>
<comment type="similarity">
    <text evidence="1">Belongs to the anhydro-N-acetylmuramic acid kinase family.</text>
</comment>
<feature type="chain" id="PRO_1000214153" description="Anhydro-N-acetylmuramic acid kinase">
    <location>
        <begin position="1"/>
        <end position="382"/>
    </location>
</feature>
<feature type="binding site" evidence="1">
    <location>
        <begin position="9"/>
        <end position="16"/>
    </location>
    <ligand>
        <name>ATP</name>
        <dbReference type="ChEBI" id="CHEBI:30616"/>
    </ligand>
</feature>